<proteinExistence type="inferred from homology"/>
<comment type="function">
    <text evidence="1">May be involved in recombination.</text>
</comment>
<comment type="subcellular location">
    <subcellularLocation>
        <location evidence="1">Cytoplasm</location>
        <location evidence="1">Nucleoid</location>
    </subcellularLocation>
</comment>
<comment type="similarity">
    <text evidence="1">Belongs to the RdgC family.</text>
</comment>
<evidence type="ECO:0000255" key="1">
    <source>
        <dbReference type="HAMAP-Rule" id="MF_00194"/>
    </source>
</evidence>
<dbReference type="EMBL" id="CP000472">
    <property type="protein sequence ID" value="ACJ28056.1"/>
    <property type="molecule type" value="Genomic_DNA"/>
</dbReference>
<dbReference type="RefSeq" id="WP_020911434.1">
    <property type="nucleotide sequence ID" value="NC_011566.1"/>
</dbReference>
<dbReference type="SMR" id="B8CKL7"/>
<dbReference type="STRING" id="225849.swp_1262"/>
<dbReference type="KEGG" id="swp:swp_1262"/>
<dbReference type="eggNOG" id="COG2974">
    <property type="taxonomic scope" value="Bacteria"/>
</dbReference>
<dbReference type="HOGENOM" id="CLU_052038_1_1_6"/>
<dbReference type="OrthoDB" id="5290530at2"/>
<dbReference type="Proteomes" id="UP000000753">
    <property type="component" value="Chromosome"/>
</dbReference>
<dbReference type="GO" id="GO:0043590">
    <property type="term" value="C:bacterial nucleoid"/>
    <property type="evidence" value="ECO:0007669"/>
    <property type="project" value="TreeGrafter"/>
</dbReference>
<dbReference type="GO" id="GO:0005737">
    <property type="term" value="C:cytoplasm"/>
    <property type="evidence" value="ECO:0007669"/>
    <property type="project" value="UniProtKB-UniRule"/>
</dbReference>
<dbReference type="GO" id="GO:0003690">
    <property type="term" value="F:double-stranded DNA binding"/>
    <property type="evidence" value="ECO:0007669"/>
    <property type="project" value="TreeGrafter"/>
</dbReference>
<dbReference type="GO" id="GO:0006310">
    <property type="term" value="P:DNA recombination"/>
    <property type="evidence" value="ECO:0007669"/>
    <property type="project" value="UniProtKB-UniRule"/>
</dbReference>
<dbReference type="GO" id="GO:0000018">
    <property type="term" value="P:regulation of DNA recombination"/>
    <property type="evidence" value="ECO:0007669"/>
    <property type="project" value="TreeGrafter"/>
</dbReference>
<dbReference type="HAMAP" id="MF_00194">
    <property type="entry name" value="RdgC"/>
    <property type="match status" value="1"/>
</dbReference>
<dbReference type="InterPro" id="IPR007476">
    <property type="entry name" value="RdgC"/>
</dbReference>
<dbReference type="NCBIfam" id="NF001462">
    <property type="entry name" value="PRK00321.1-3"/>
    <property type="match status" value="1"/>
</dbReference>
<dbReference type="NCBIfam" id="NF001464">
    <property type="entry name" value="PRK00321.1-5"/>
    <property type="match status" value="1"/>
</dbReference>
<dbReference type="PANTHER" id="PTHR38103">
    <property type="entry name" value="RECOMBINATION-ASSOCIATED PROTEIN RDGC"/>
    <property type="match status" value="1"/>
</dbReference>
<dbReference type="PANTHER" id="PTHR38103:SF1">
    <property type="entry name" value="RECOMBINATION-ASSOCIATED PROTEIN RDGC"/>
    <property type="match status" value="1"/>
</dbReference>
<dbReference type="Pfam" id="PF04381">
    <property type="entry name" value="RdgC"/>
    <property type="match status" value="1"/>
</dbReference>
<accession>B8CKL7</accession>
<protein>
    <recommendedName>
        <fullName evidence="1">Recombination-associated protein RdgC</fullName>
    </recommendedName>
</protein>
<reference key="1">
    <citation type="journal article" date="2008" name="PLoS ONE">
        <title>Environmental adaptation: genomic analysis of the piezotolerant and psychrotolerant deep-sea iron reducing bacterium Shewanella piezotolerans WP3.</title>
        <authorList>
            <person name="Wang F."/>
            <person name="Wang J."/>
            <person name="Jian H."/>
            <person name="Zhang B."/>
            <person name="Li S."/>
            <person name="Wang F."/>
            <person name="Zeng X."/>
            <person name="Gao L."/>
            <person name="Bartlett D.H."/>
            <person name="Yu J."/>
            <person name="Hu S."/>
            <person name="Xiao X."/>
        </authorList>
    </citation>
    <scope>NUCLEOTIDE SEQUENCE [LARGE SCALE GENOMIC DNA]</scope>
    <source>
        <strain>WP3 / JCM 13877</strain>
    </source>
</reference>
<organism>
    <name type="scientific">Shewanella piezotolerans (strain WP3 / JCM 13877)</name>
    <dbReference type="NCBI Taxonomy" id="225849"/>
    <lineage>
        <taxon>Bacteria</taxon>
        <taxon>Pseudomonadati</taxon>
        <taxon>Pseudomonadota</taxon>
        <taxon>Gammaproteobacteria</taxon>
        <taxon>Alteromonadales</taxon>
        <taxon>Shewanellaceae</taxon>
        <taxon>Shewanella</taxon>
    </lineage>
</organism>
<sequence length="303" mass="33745">MWFKNLTVYRFNKPFSVDTESMEKSLEDFTFSPCSSQDISKFGFSNAFGKHGDTLVHTAADRHLICATKEEKILPAQVIKEALEEKVALLESEDGRKLAKKEKDALKDEITTTLLPRAFSRRSQIRALILPEIQMILVDSSSAAKSEELMALLRKAIGTLPIIPMSFKTPIETQLTEWLKESKTPAPFEMQDEAELKSDSDEGGIVRFKQQDLSENEVLAHIEVGKQVHKLALHFGQSVAFLLQSDAAIKRLKFSEEFRAGNDDLGNEDPMARLDADFALMGSELIALVNAVVEALGGLEDSI</sequence>
<keyword id="KW-0963">Cytoplasm</keyword>
<keyword id="KW-0233">DNA recombination</keyword>
<feature type="chain" id="PRO_1000118633" description="Recombination-associated protein RdgC">
    <location>
        <begin position="1"/>
        <end position="303"/>
    </location>
</feature>
<name>RDGC_SHEPW</name>
<gene>
    <name evidence="1" type="primary">rdgC</name>
    <name type="ordered locus">swp_1262</name>
</gene>